<dbReference type="EC" id="3.5.99.6" evidence="1"/>
<dbReference type="EMBL" id="CP000921">
    <property type="protein sequence ID" value="ACO23807.1"/>
    <property type="molecule type" value="Genomic_DNA"/>
</dbReference>
<dbReference type="RefSeq" id="WP_000864617.1">
    <property type="nucleotide sequence ID" value="NC_012469.1"/>
</dbReference>
<dbReference type="SMR" id="C1CQU2"/>
<dbReference type="KEGG" id="snt:SPT_0859"/>
<dbReference type="HOGENOM" id="CLU_049611_1_0_9"/>
<dbReference type="UniPathway" id="UPA00629">
    <property type="reaction ID" value="UER00684"/>
</dbReference>
<dbReference type="GO" id="GO:0005737">
    <property type="term" value="C:cytoplasm"/>
    <property type="evidence" value="ECO:0007669"/>
    <property type="project" value="TreeGrafter"/>
</dbReference>
<dbReference type="GO" id="GO:0004342">
    <property type="term" value="F:glucosamine-6-phosphate deaminase activity"/>
    <property type="evidence" value="ECO:0007669"/>
    <property type="project" value="UniProtKB-UniRule"/>
</dbReference>
<dbReference type="GO" id="GO:0042802">
    <property type="term" value="F:identical protein binding"/>
    <property type="evidence" value="ECO:0007669"/>
    <property type="project" value="TreeGrafter"/>
</dbReference>
<dbReference type="GO" id="GO:0005975">
    <property type="term" value="P:carbohydrate metabolic process"/>
    <property type="evidence" value="ECO:0007669"/>
    <property type="project" value="InterPro"/>
</dbReference>
<dbReference type="GO" id="GO:0006043">
    <property type="term" value="P:glucosamine catabolic process"/>
    <property type="evidence" value="ECO:0007669"/>
    <property type="project" value="TreeGrafter"/>
</dbReference>
<dbReference type="GO" id="GO:0006046">
    <property type="term" value="P:N-acetylglucosamine catabolic process"/>
    <property type="evidence" value="ECO:0007669"/>
    <property type="project" value="TreeGrafter"/>
</dbReference>
<dbReference type="GO" id="GO:0019262">
    <property type="term" value="P:N-acetylneuraminate catabolic process"/>
    <property type="evidence" value="ECO:0007669"/>
    <property type="project" value="UniProtKB-UniRule"/>
</dbReference>
<dbReference type="CDD" id="cd01399">
    <property type="entry name" value="GlcN6P_deaminase"/>
    <property type="match status" value="1"/>
</dbReference>
<dbReference type="FunFam" id="3.40.50.1360:FF:000003">
    <property type="entry name" value="Glucosamine-6-phosphate deaminase"/>
    <property type="match status" value="1"/>
</dbReference>
<dbReference type="Gene3D" id="3.40.50.1360">
    <property type="match status" value="1"/>
</dbReference>
<dbReference type="HAMAP" id="MF_01241">
    <property type="entry name" value="GlcN6P_deamin"/>
    <property type="match status" value="1"/>
</dbReference>
<dbReference type="InterPro" id="IPR006148">
    <property type="entry name" value="Glc/Gal-6P_isomerase"/>
</dbReference>
<dbReference type="InterPro" id="IPR004547">
    <property type="entry name" value="Glucosamine6P_isomerase"/>
</dbReference>
<dbReference type="InterPro" id="IPR018321">
    <property type="entry name" value="Glucosamine6P_isomerase_CS"/>
</dbReference>
<dbReference type="InterPro" id="IPR037171">
    <property type="entry name" value="NagB/RpiA_transferase-like"/>
</dbReference>
<dbReference type="PANTHER" id="PTHR11280">
    <property type="entry name" value="GLUCOSAMINE-6-PHOSPHATE ISOMERASE"/>
    <property type="match status" value="1"/>
</dbReference>
<dbReference type="PANTHER" id="PTHR11280:SF5">
    <property type="entry name" value="GLUCOSAMINE-6-PHOSPHATE ISOMERASE"/>
    <property type="match status" value="1"/>
</dbReference>
<dbReference type="Pfam" id="PF01182">
    <property type="entry name" value="Glucosamine_iso"/>
    <property type="match status" value="1"/>
</dbReference>
<dbReference type="SUPFAM" id="SSF100950">
    <property type="entry name" value="NagB/RpiA/CoA transferase-like"/>
    <property type="match status" value="1"/>
</dbReference>
<dbReference type="PROSITE" id="PS01161">
    <property type="entry name" value="GLC_GALNAC_ISOMERASE"/>
    <property type="match status" value="1"/>
</dbReference>
<protein>
    <recommendedName>
        <fullName evidence="1">Glucosamine-6-phosphate deaminase</fullName>
        <ecNumber evidence="1">3.5.99.6</ecNumber>
    </recommendedName>
    <alternativeName>
        <fullName evidence="1">GlcN6P deaminase</fullName>
        <shortName evidence="1">GNPDA</shortName>
    </alternativeName>
    <alternativeName>
        <fullName evidence="1">Glucosamine-6-phosphate isomerase</fullName>
    </alternativeName>
</protein>
<evidence type="ECO:0000255" key="1">
    <source>
        <dbReference type="HAMAP-Rule" id="MF_01241"/>
    </source>
</evidence>
<reference key="1">
    <citation type="journal article" date="2010" name="Genome Biol.">
        <title>Structure and dynamics of the pan-genome of Streptococcus pneumoniae and closely related species.</title>
        <authorList>
            <person name="Donati C."/>
            <person name="Hiller N.L."/>
            <person name="Tettelin H."/>
            <person name="Muzzi A."/>
            <person name="Croucher N.J."/>
            <person name="Angiuoli S.V."/>
            <person name="Oggioni M."/>
            <person name="Dunning Hotopp J.C."/>
            <person name="Hu F.Z."/>
            <person name="Riley D.R."/>
            <person name="Covacci A."/>
            <person name="Mitchell T.J."/>
            <person name="Bentley S.D."/>
            <person name="Kilian M."/>
            <person name="Ehrlich G.D."/>
            <person name="Rappuoli R."/>
            <person name="Moxon E.R."/>
            <person name="Masignani V."/>
        </authorList>
    </citation>
    <scope>NUCLEOTIDE SEQUENCE [LARGE SCALE GENOMIC DNA]</scope>
    <source>
        <strain>Taiwan19F-14</strain>
    </source>
</reference>
<proteinExistence type="inferred from homology"/>
<keyword id="KW-0119">Carbohydrate metabolism</keyword>
<keyword id="KW-0378">Hydrolase</keyword>
<comment type="function">
    <text evidence="1">Catalyzes the reversible isomerization-deamination of glucosamine 6-phosphate (GlcN6P) to form fructose 6-phosphate (Fru6P) and ammonium ion.</text>
</comment>
<comment type="catalytic activity">
    <reaction evidence="1">
        <text>alpha-D-glucosamine 6-phosphate + H2O = beta-D-fructose 6-phosphate + NH4(+)</text>
        <dbReference type="Rhea" id="RHEA:12172"/>
        <dbReference type="ChEBI" id="CHEBI:15377"/>
        <dbReference type="ChEBI" id="CHEBI:28938"/>
        <dbReference type="ChEBI" id="CHEBI:57634"/>
        <dbReference type="ChEBI" id="CHEBI:75989"/>
        <dbReference type="EC" id="3.5.99.6"/>
    </reaction>
</comment>
<comment type="pathway">
    <text evidence="1">Amino-sugar metabolism; N-acetylneuraminate degradation; D-fructose 6-phosphate from N-acetylneuraminate: step 5/5.</text>
</comment>
<comment type="similarity">
    <text evidence="1">Belongs to the glucosamine/galactosamine-6-phosphate isomerase family. NagB subfamily.</text>
</comment>
<organism>
    <name type="scientific">Streptococcus pneumoniae (strain Taiwan19F-14)</name>
    <dbReference type="NCBI Taxonomy" id="487213"/>
    <lineage>
        <taxon>Bacteria</taxon>
        <taxon>Bacillati</taxon>
        <taxon>Bacillota</taxon>
        <taxon>Bacilli</taxon>
        <taxon>Lactobacillales</taxon>
        <taxon>Streptococcaceae</taxon>
        <taxon>Streptococcus</taxon>
    </lineage>
</organism>
<sequence>MKVIKVENQVQGGKVAFEILKEKLANGAQTLGLATGSSPLEFYKEIVESDLDFSNLTSVNLDEYVGLDGDNPQSYRYFMQENLFNQKPFKESFLPRGVKDNAEAEVERYNQILADHPVDLQILGIGRNGHIGFNEPGTPFDSQTHLVELDQSTIEANARFFAKIEDVPTQAISMGIKNILDAKSIILFAYGESKAEAIAGTVSGPVTENLPASSLQNHPDVTIIADAEALSLLEK</sequence>
<gene>
    <name evidence="1" type="primary">nagB</name>
    <name type="ordered locus">SPT_0859</name>
</gene>
<accession>C1CQU2</accession>
<name>NAGB_STRZT</name>
<feature type="chain" id="PRO_1000165031" description="Glucosamine-6-phosphate deaminase">
    <location>
        <begin position="1"/>
        <end position="235"/>
    </location>
</feature>
<feature type="active site" description="Proton acceptor; for enolization step" evidence="1">
    <location>
        <position position="62"/>
    </location>
</feature>
<feature type="active site" description="For ring-opening step" evidence="1">
    <location>
        <position position="128"/>
    </location>
</feature>
<feature type="active site" description="Proton acceptor; for ring-opening step" evidence="1">
    <location>
        <position position="130"/>
    </location>
</feature>
<feature type="active site" description="For ring-opening step" evidence="1">
    <location>
        <position position="135"/>
    </location>
</feature>